<evidence type="ECO:0000250" key="1">
    <source>
        <dbReference type="UniProtKB" id="Q96AW1"/>
    </source>
</evidence>
<evidence type="ECO:0000255" key="2"/>
<evidence type="ECO:0000256" key="3">
    <source>
        <dbReference type="SAM" id="MobiDB-lite"/>
    </source>
</evidence>
<evidence type="ECO:0000305" key="4"/>
<evidence type="ECO:0000312" key="5">
    <source>
        <dbReference type="RGD" id="1306494"/>
    </source>
</evidence>
<accession>B5DEK8</accession>
<gene>
    <name evidence="5" type="primary">Vopp1</name>
    <name type="synonym">Ecop</name>
</gene>
<feature type="signal peptide" evidence="2">
    <location>
        <begin position="1"/>
        <end position="22"/>
    </location>
</feature>
<feature type="chain" id="PRO_0000417668" description="WW domain binding protein VOPP1">
    <location>
        <begin position="23"/>
        <end position="172"/>
    </location>
</feature>
<feature type="topological domain" description="Extracellular" evidence="2">
    <location>
        <begin position="23"/>
        <end position="60"/>
    </location>
</feature>
<feature type="transmembrane region" description="Helical" evidence="2">
    <location>
        <begin position="61"/>
        <end position="81"/>
    </location>
</feature>
<feature type="topological domain" description="Cytoplasmic" evidence="2">
    <location>
        <begin position="82"/>
        <end position="172"/>
    </location>
</feature>
<feature type="region of interest" description="Disordered" evidence="3">
    <location>
        <begin position="139"/>
        <end position="172"/>
    </location>
</feature>
<feature type="compositionally biased region" description="Pro residues" evidence="3">
    <location>
        <begin position="151"/>
        <end position="165"/>
    </location>
</feature>
<reference key="1">
    <citation type="journal article" date="2004" name="Nature">
        <title>Genome sequence of the Brown Norway rat yields insights into mammalian evolution.</title>
        <authorList>
            <person name="Gibbs R.A."/>
            <person name="Weinstock G.M."/>
            <person name="Metzker M.L."/>
            <person name="Muzny D.M."/>
            <person name="Sodergren E.J."/>
            <person name="Scherer S."/>
            <person name="Scott G."/>
            <person name="Steffen D."/>
            <person name="Worley K.C."/>
            <person name="Burch P.E."/>
            <person name="Okwuonu G."/>
            <person name="Hines S."/>
            <person name="Lewis L."/>
            <person name="Deramo C."/>
            <person name="Delgado O."/>
            <person name="Dugan-Rocha S."/>
            <person name="Miner G."/>
            <person name="Morgan M."/>
            <person name="Hawes A."/>
            <person name="Gill R."/>
            <person name="Holt R.A."/>
            <person name="Adams M.D."/>
            <person name="Amanatides P.G."/>
            <person name="Baden-Tillson H."/>
            <person name="Barnstead M."/>
            <person name="Chin S."/>
            <person name="Evans C.A."/>
            <person name="Ferriera S."/>
            <person name="Fosler C."/>
            <person name="Glodek A."/>
            <person name="Gu Z."/>
            <person name="Jennings D."/>
            <person name="Kraft C.L."/>
            <person name="Nguyen T."/>
            <person name="Pfannkoch C.M."/>
            <person name="Sitter C."/>
            <person name="Sutton G.G."/>
            <person name="Venter J.C."/>
            <person name="Woodage T."/>
            <person name="Smith D."/>
            <person name="Lee H.-M."/>
            <person name="Gustafson E."/>
            <person name="Cahill P."/>
            <person name="Kana A."/>
            <person name="Doucette-Stamm L."/>
            <person name="Weinstock K."/>
            <person name="Fechtel K."/>
            <person name="Weiss R.B."/>
            <person name="Dunn D.M."/>
            <person name="Green E.D."/>
            <person name="Blakesley R.W."/>
            <person name="Bouffard G.G."/>
            <person name="De Jong P.J."/>
            <person name="Osoegawa K."/>
            <person name="Zhu B."/>
            <person name="Marra M."/>
            <person name="Schein J."/>
            <person name="Bosdet I."/>
            <person name="Fjell C."/>
            <person name="Jones S."/>
            <person name="Krzywinski M."/>
            <person name="Mathewson C."/>
            <person name="Siddiqui A."/>
            <person name="Wye N."/>
            <person name="McPherson J."/>
            <person name="Zhao S."/>
            <person name="Fraser C.M."/>
            <person name="Shetty J."/>
            <person name="Shatsman S."/>
            <person name="Geer K."/>
            <person name="Chen Y."/>
            <person name="Abramzon S."/>
            <person name="Nierman W.C."/>
            <person name="Havlak P.H."/>
            <person name="Chen R."/>
            <person name="Durbin K.J."/>
            <person name="Egan A."/>
            <person name="Ren Y."/>
            <person name="Song X.-Z."/>
            <person name="Li B."/>
            <person name="Liu Y."/>
            <person name="Qin X."/>
            <person name="Cawley S."/>
            <person name="Cooney A.J."/>
            <person name="D'Souza L.M."/>
            <person name="Martin K."/>
            <person name="Wu J.Q."/>
            <person name="Gonzalez-Garay M.L."/>
            <person name="Jackson A.R."/>
            <person name="Kalafus K.J."/>
            <person name="McLeod M.P."/>
            <person name="Milosavljevic A."/>
            <person name="Virk D."/>
            <person name="Volkov A."/>
            <person name="Wheeler D.A."/>
            <person name="Zhang Z."/>
            <person name="Bailey J.A."/>
            <person name="Eichler E.E."/>
            <person name="Tuzun E."/>
            <person name="Birney E."/>
            <person name="Mongin E."/>
            <person name="Ureta-Vidal A."/>
            <person name="Woodwark C."/>
            <person name="Zdobnov E."/>
            <person name="Bork P."/>
            <person name="Suyama M."/>
            <person name="Torrents D."/>
            <person name="Alexandersson M."/>
            <person name="Trask B.J."/>
            <person name="Young J.M."/>
            <person name="Huang H."/>
            <person name="Wang H."/>
            <person name="Xing H."/>
            <person name="Daniels S."/>
            <person name="Gietzen D."/>
            <person name="Schmidt J."/>
            <person name="Stevens K."/>
            <person name="Vitt U."/>
            <person name="Wingrove J."/>
            <person name="Camara F."/>
            <person name="Mar Alba M."/>
            <person name="Abril J.F."/>
            <person name="Guigo R."/>
            <person name="Smit A."/>
            <person name="Dubchak I."/>
            <person name="Rubin E.M."/>
            <person name="Couronne O."/>
            <person name="Poliakov A."/>
            <person name="Huebner N."/>
            <person name="Ganten D."/>
            <person name="Goesele C."/>
            <person name="Hummel O."/>
            <person name="Kreitler T."/>
            <person name="Lee Y.-A."/>
            <person name="Monti J."/>
            <person name="Schulz H."/>
            <person name="Zimdahl H."/>
            <person name="Himmelbauer H."/>
            <person name="Lehrach H."/>
            <person name="Jacob H.J."/>
            <person name="Bromberg S."/>
            <person name="Gullings-Handley J."/>
            <person name="Jensen-Seaman M.I."/>
            <person name="Kwitek A.E."/>
            <person name="Lazar J."/>
            <person name="Pasko D."/>
            <person name="Tonellato P.J."/>
            <person name="Twigger S."/>
            <person name="Ponting C.P."/>
            <person name="Duarte J.M."/>
            <person name="Rice S."/>
            <person name="Goodstadt L."/>
            <person name="Beatson S.A."/>
            <person name="Emes R.D."/>
            <person name="Winter E.E."/>
            <person name="Webber C."/>
            <person name="Brandt P."/>
            <person name="Nyakatura G."/>
            <person name="Adetobi M."/>
            <person name="Chiaromonte F."/>
            <person name="Elnitski L."/>
            <person name="Eswara P."/>
            <person name="Hardison R.C."/>
            <person name="Hou M."/>
            <person name="Kolbe D."/>
            <person name="Makova K."/>
            <person name="Miller W."/>
            <person name="Nekrutenko A."/>
            <person name="Riemer C."/>
            <person name="Schwartz S."/>
            <person name="Taylor J."/>
            <person name="Yang S."/>
            <person name="Zhang Y."/>
            <person name="Lindpaintner K."/>
            <person name="Andrews T.D."/>
            <person name="Caccamo M."/>
            <person name="Clamp M."/>
            <person name="Clarke L."/>
            <person name="Curwen V."/>
            <person name="Durbin R.M."/>
            <person name="Eyras E."/>
            <person name="Searle S.M."/>
            <person name="Cooper G.M."/>
            <person name="Batzoglou S."/>
            <person name="Brudno M."/>
            <person name="Sidow A."/>
            <person name="Stone E.A."/>
            <person name="Payseur B.A."/>
            <person name="Bourque G."/>
            <person name="Lopez-Otin C."/>
            <person name="Puente X.S."/>
            <person name="Chakrabarti K."/>
            <person name="Chatterji S."/>
            <person name="Dewey C."/>
            <person name="Pachter L."/>
            <person name="Bray N."/>
            <person name="Yap V.B."/>
            <person name="Caspi A."/>
            <person name="Tesler G."/>
            <person name="Pevzner P.A."/>
            <person name="Haussler D."/>
            <person name="Roskin K.M."/>
            <person name="Baertsch R."/>
            <person name="Clawson H."/>
            <person name="Furey T.S."/>
            <person name="Hinrichs A.S."/>
            <person name="Karolchik D."/>
            <person name="Kent W.J."/>
            <person name="Rosenbloom K.R."/>
            <person name="Trumbower H."/>
            <person name="Weirauch M."/>
            <person name="Cooper D.N."/>
            <person name="Stenson P.D."/>
            <person name="Ma B."/>
            <person name="Brent M."/>
            <person name="Arumugam M."/>
            <person name="Shteynberg D."/>
            <person name="Copley R.R."/>
            <person name="Taylor M.S."/>
            <person name="Riethman H."/>
            <person name="Mudunuri U."/>
            <person name="Peterson J."/>
            <person name="Guyer M."/>
            <person name="Felsenfeld A."/>
            <person name="Old S."/>
            <person name="Mockrin S."/>
            <person name="Collins F.S."/>
        </authorList>
    </citation>
    <scope>NUCLEOTIDE SEQUENCE [LARGE SCALE GENOMIC DNA]</scope>
    <source>
        <strain>Brown Norway</strain>
    </source>
</reference>
<reference key="2">
    <citation type="submission" date="2005-09" db="EMBL/GenBank/DDBJ databases">
        <authorList>
            <person name="Mural R.J."/>
            <person name="Adams M.D."/>
            <person name="Myers E.W."/>
            <person name="Smith H.O."/>
            <person name="Venter J.C."/>
        </authorList>
    </citation>
    <scope>NUCLEOTIDE SEQUENCE [LARGE SCALE GENOMIC DNA]</scope>
</reference>
<reference key="3">
    <citation type="journal article" date="2004" name="Genome Res.">
        <title>The status, quality, and expansion of the NIH full-length cDNA project: the Mammalian Gene Collection (MGC).</title>
        <authorList>
            <consortium name="The MGC Project Team"/>
        </authorList>
    </citation>
    <scope>NUCLEOTIDE SEQUENCE [LARGE SCALE MRNA]</scope>
    <source>
        <tissue>Embryonic brain</tissue>
    </source>
</reference>
<name>VOPP1_RAT</name>
<proteinExistence type="evidence at transcript level"/>
<protein>
    <recommendedName>
        <fullName evidence="5">WW domain binding protein VOPP1</fullName>
    </recommendedName>
    <alternativeName>
        <fullName>EGFR-coamplified and overexpressed protein</fullName>
        <shortName>ECop</shortName>
    </alternativeName>
    <alternativeName>
        <fullName>Vesicular, overexpressed in cancer, prosurvival protein 1</fullName>
    </alternativeName>
</protein>
<keyword id="KW-0968">Cytoplasmic vesicle</keyword>
<keyword id="KW-0967">Endosome</keyword>
<keyword id="KW-0458">Lysosome</keyword>
<keyword id="KW-0472">Membrane</keyword>
<keyword id="KW-1185">Reference proteome</keyword>
<keyword id="KW-0732">Signal</keyword>
<keyword id="KW-0804">Transcription</keyword>
<keyword id="KW-0805">Transcription regulation</keyword>
<keyword id="KW-0812">Transmembrane</keyword>
<keyword id="KW-1133">Transmembrane helix</keyword>
<dbReference type="EMBL" id="AC126722">
    <property type="status" value="NOT_ANNOTATED_CDS"/>
    <property type="molecule type" value="Genomic_DNA"/>
</dbReference>
<dbReference type="EMBL" id="CH474011">
    <property type="protein sequence ID" value="EDL88042.1"/>
    <property type="molecule type" value="Genomic_DNA"/>
</dbReference>
<dbReference type="EMBL" id="BC168709">
    <property type="protein sequence ID" value="AAI68709.1"/>
    <property type="molecule type" value="mRNA"/>
</dbReference>
<dbReference type="RefSeq" id="NP_001102100.1">
    <property type="nucleotide sequence ID" value="NM_001108630.1"/>
</dbReference>
<dbReference type="FunCoup" id="B5DEK8">
    <property type="interactions" value="2016"/>
</dbReference>
<dbReference type="STRING" id="10116.ENSRNOP00000008885"/>
<dbReference type="PhosphoSitePlus" id="B5DEK8"/>
<dbReference type="PaxDb" id="10116-ENSRNOP00000008885"/>
<dbReference type="Ensembl" id="ENSRNOT00000008885.6">
    <property type="protein sequence ID" value="ENSRNOP00000008885.4"/>
    <property type="gene ID" value="ENSRNOG00000006646.7"/>
</dbReference>
<dbReference type="GeneID" id="362374"/>
<dbReference type="KEGG" id="rno:362374"/>
<dbReference type="AGR" id="RGD:1306494"/>
<dbReference type="CTD" id="81552"/>
<dbReference type="RGD" id="1306494">
    <property type="gene designation" value="Vopp1"/>
</dbReference>
<dbReference type="eggNOG" id="ENOG502RYIF">
    <property type="taxonomic scope" value="Eukaryota"/>
</dbReference>
<dbReference type="GeneTree" id="ENSGT00390000015821"/>
<dbReference type="HOGENOM" id="CLU_1694909_0_0_1"/>
<dbReference type="InParanoid" id="B5DEK8"/>
<dbReference type="OMA" id="FLECIEA"/>
<dbReference type="OrthoDB" id="52964at9989"/>
<dbReference type="TreeFam" id="TF332098"/>
<dbReference type="PRO" id="PR:B5DEK8"/>
<dbReference type="Proteomes" id="UP000002494">
    <property type="component" value="Chromosome 4"/>
</dbReference>
<dbReference type="Proteomes" id="UP000234681">
    <property type="component" value="Chromosome 4"/>
</dbReference>
<dbReference type="Bgee" id="ENSRNOG00000006646">
    <property type="expression patterns" value="Expressed in heart and 20 other cell types or tissues"/>
</dbReference>
<dbReference type="GO" id="GO:0030659">
    <property type="term" value="C:cytoplasmic vesicle membrane"/>
    <property type="evidence" value="ECO:0000266"/>
    <property type="project" value="RGD"/>
</dbReference>
<dbReference type="GO" id="GO:0005770">
    <property type="term" value="C:late endosome"/>
    <property type="evidence" value="ECO:0000266"/>
    <property type="project" value="RGD"/>
</dbReference>
<dbReference type="GO" id="GO:0031902">
    <property type="term" value="C:late endosome membrane"/>
    <property type="evidence" value="ECO:0007669"/>
    <property type="project" value="UniProtKB-SubCell"/>
</dbReference>
<dbReference type="GO" id="GO:0005765">
    <property type="term" value="C:lysosomal membrane"/>
    <property type="evidence" value="ECO:0007669"/>
    <property type="project" value="UniProtKB-SubCell"/>
</dbReference>
<dbReference type="GO" id="GO:0005764">
    <property type="term" value="C:lysosome"/>
    <property type="evidence" value="ECO:0000266"/>
    <property type="project" value="RGD"/>
</dbReference>
<dbReference type="GO" id="GO:0031090">
    <property type="term" value="C:organelle membrane"/>
    <property type="evidence" value="ECO:0000266"/>
    <property type="project" value="RGD"/>
</dbReference>
<dbReference type="GO" id="GO:0019899">
    <property type="term" value="F:enzyme binding"/>
    <property type="evidence" value="ECO:0000266"/>
    <property type="project" value="RGD"/>
</dbReference>
<dbReference type="InterPro" id="IPR026229">
    <property type="entry name" value="VOPP1"/>
</dbReference>
<dbReference type="PANTHER" id="PTHR14971">
    <property type="entry name" value="VESICULAR, OVEREXPRESSED IN CANCER, PROSURVIVAL PROTEIN 1"/>
    <property type="match status" value="1"/>
</dbReference>
<dbReference type="PANTHER" id="PTHR14971:SF2">
    <property type="entry name" value="VESICULAR, OVEREXPRESSED IN CANCER, PROSURVIVAL PROTEIN 1"/>
    <property type="match status" value="1"/>
</dbReference>
<dbReference type="PRINTS" id="PR02068">
    <property type="entry name" value="VOPPROTEIN1"/>
</dbReference>
<organism>
    <name type="scientific">Rattus norvegicus</name>
    <name type="common">Rat</name>
    <dbReference type="NCBI Taxonomy" id="10116"/>
    <lineage>
        <taxon>Eukaryota</taxon>
        <taxon>Metazoa</taxon>
        <taxon>Chordata</taxon>
        <taxon>Craniata</taxon>
        <taxon>Vertebrata</taxon>
        <taxon>Euteleostomi</taxon>
        <taxon>Mammalia</taxon>
        <taxon>Eutheria</taxon>
        <taxon>Euarchontoglires</taxon>
        <taxon>Glires</taxon>
        <taxon>Rodentia</taxon>
        <taxon>Myomorpha</taxon>
        <taxon>Muroidea</taxon>
        <taxon>Muridae</taxon>
        <taxon>Murinae</taxon>
        <taxon>Rattus</taxon>
    </lineage>
</organism>
<comment type="function">
    <text evidence="1">Increases the transcriptional activity of NFKB1 by facilitating its nuclear translocation, DNA-binding and associated apoptotic response, when overexpressed. May sequester WWOX in lysosomal vesicles and thereby regulate WWOX role as tumor suppressor.</text>
</comment>
<comment type="subunit">
    <text evidence="1">Interacts with WWOX (via WW domain).</text>
</comment>
<comment type="subcellular location">
    <subcellularLocation>
        <location evidence="1">Cytoplasmic vesicle membrane</location>
        <topology evidence="1">Single-pass type I membrane protein</topology>
    </subcellularLocation>
    <subcellularLocation>
        <location evidence="1">Late endosome membrane</location>
        <topology evidence="1">Single-pass membrane protein</topology>
    </subcellularLocation>
    <subcellularLocation>
        <location evidence="1">Lysosome membrane</location>
        <topology evidence="1">Single-pass membrane protein</topology>
    </subcellularLocation>
    <text evidence="1">When overexpressed, localizes in the nucleus and perinuclear regions.</text>
</comment>
<comment type="similarity">
    <text evidence="4">Belongs to the VOPP1/ECOP family.</text>
</comment>
<sequence length="172" mass="19411">MARPLGRVAALLLGLLMECTEAKKHCWYFEGLYPTYYICRSYEDCCGSRCCVRALSIQRLWYFWFLLMMGVLFCCGAGFFIRRRMYPPPLIEEPTFNVSYTRQPPNPAPGAQQMGPPYYTDPGGPGMNPVGNTMAMAFQVQPNSPHGGTTYPPPPSYCNTPPPPYEQVVKDK</sequence>